<proteinExistence type="inferred from homology"/>
<gene>
    <name evidence="1" type="primary">hslU</name>
    <name type="ordered locus">PputGB1_5051</name>
</gene>
<sequence>MSMTPREIVHELNRHIIGQDDAKRAVAIALRNRWRRMQLPAELRAEVTPKNILMIGPTGVGKTEIARRLAKLANAPFLKVEATKFTEVGYVGRDVESIIRDLADAALKMLREQEIIRVRHRAEDAAEDRILDALLPQARVTSFSEEAAQTSSDSNTRQLFRKRLREGQLDDKEIEIEVADAVGVEIAAPPGMEEMTNQLQSLFANMGKGKRKARKLKVKEALKMVRDEEASRLVNEEELKAKALEAVEQHGIVFIDEIDKVAKRGNVGGADVSREGVQRDLLPLIEGCTVNTKLGMVKTDHILFIASGAFHLSKPSDLVPELQGRLPIRVELKALTPEDFERILQEPHASLTEQYQALLKTEGLNIAFQADGIKRLAEIAYQVNEKTENIGARRLHTLLERLLEEVSFSAGDLASTHDEAPIQIDAAYVNSHLGELAQNEDLSRYIL</sequence>
<accession>B0KM26</accession>
<keyword id="KW-0067">ATP-binding</keyword>
<keyword id="KW-0143">Chaperone</keyword>
<keyword id="KW-0963">Cytoplasm</keyword>
<keyword id="KW-0547">Nucleotide-binding</keyword>
<keyword id="KW-0346">Stress response</keyword>
<comment type="function">
    <text evidence="1">ATPase subunit of a proteasome-like degradation complex; this subunit has chaperone activity. The binding of ATP and its subsequent hydrolysis by HslU are essential for unfolding of protein substrates subsequently hydrolyzed by HslV. HslU recognizes the N-terminal part of its protein substrates and unfolds these before they are guided to HslV for hydrolysis.</text>
</comment>
<comment type="subunit">
    <text evidence="1">A double ring-shaped homohexamer of HslV is capped on each side by a ring-shaped HslU homohexamer. The assembly of the HslU/HslV complex is dependent on binding of ATP.</text>
</comment>
<comment type="subcellular location">
    <subcellularLocation>
        <location evidence="1">Cytoplasm</location>
    </subcellularLocation>
</comment>
<comment type="similarity">
    <text evidence="1">Belongs to the ClpX chaperone family. HslU subfamily.</text>
</comment>
<reference key="1">
    <citation type="submission" date="2008-01" db="EMBL/GenBank/DDBJ databases">
        <title>Complete sequence of Pseudomonas putida GB-1.</title>
        <authorList>
            <consortium name="US DOE Joint Genome Institute"/>
            <person name="Copeland A."/>
            <person name="Lucas S."/>
            <person name="Lapidus A."/>
            <person name="Barry K."/>
            <person name="Glavina del Rio T."/>
            <person name="Dalin E."/>
            <person name="Tice H."/>
            <person name="Pitluck S."/>
            <person name="Bruce D."/>
            <person name="Goodwin L."/>
            <person name="Chertkov O."/>
            <person name="Brettin T."/>
            <person name="Detter J.C."/>
            <person name="Han C."/>
            <person name="Kuske C.R."/>
            <person name="Schmutz J."/>
            <person name="Larimer F."/>
            <person name="Land M."/>
            <person name="Hauser L."/>
            <person name="Kyrpides N."/>
            <person name="Kim E."/>
            <person name="McCarthy J.K."/>
            <person name="Richardson P."/>
        </authorList>
    </citation>
    <scope>NUCLEOTIDE SEQUENCE [LARGE SCALE GENOMIC DNA]</scope>
    <source>
        <strain>GB-1</strain>
    </source>
</reference>
<organism>
    <name type="scientific">Pseudomonas putida (strain GB-1)</name>
    <dbReference type="NCBI Taxonomy" id="76869"/>
    <lineage>
        <taxon>Bacteria</taxon>
        <taxon>Pseudomonadati</taxon>
        <taxon>Pseudomonadota</taxon>
        <taxon>Gammaproteobacteria</taxon>
        <taxon>Pseudomonadales</taxon>
        <taxon>Pseudomonadaceae</taxon>
        <taxon>Pseudomonas</taxon>
    </lineage>
</organism>
<evidence type="ECO:0000255" key="1">
    <source>
        <dbReference type="HAMAP-Rule" id="MF_00249"/>
    </source>
</evidence>
<name>HSLU_PSEPG</name>
<dbReference type="EMBL" id="CP000926">
    <property type="protein sequence ID" value="ABZ00936.1"/>
    <property type="molecule type" value="Genomic_DNA"/>
</dbReference>
<dbReference type="RefSeq" id="WP_012274558.1">
    <property type="nucleotide sequence ID" value="NC_010322.1"/>
</dbReference>
<dbReference type="SMR" id="B0KM26"/>
<dbReference type="KEGG" id="ppg:PputGB1_5051"/>
<dbReference type="eggNOG" id="COG1220">
    <property type="taxonomic scope" value="Bacteria"/>
</dbReference>
<dbReference type="HOGENOM" id="CLU_033123_0_0_6"/>
<dbReference type="Proteomes" id="UP000002157">
    <property type="component" value="Chromosome"/>
</dbReference>
<dbReference type="GO" id="GO:0009376">
    <property type="term" value="C:HslUV protease complex"/>
    <property type="evidence" value="ECO:0007669"/>
    <property type="project" value="UniProtKB-UniRule"/>
</dbReference>
<dbReference type="GO" id="GO:0005524">
    <property type="term" value="F:ATP binding"/>
    <property type="evidence" value="ECO:0007669"/>
    <property type="project" value="UniProtKB-UniRule"/>
</dbReference>
<dbReference type="GO" id="GO:0016887">
    <property type="term" value="F:ATP hydrolysis activity"/>
    <property type="evidence" value="ECO:0007669"/>
    <property type="project" value="InterPro"/>
</dbReference>
<dbReference type="GO" id="GO:0008233">
    <property type="term" value="F:peptidase activity"/>
    <property type="evidence" value="ECO:0007669"/>
    <property type="project" value="InterPro"/>
</dbReference>
<dbReference type="GO" id="GO:0036402">
    <property type="term" value="F:proteasome-activating activity"/>
    <property type="evidence" value="ECO:0007669"/>
    <property type="project" value="UniProtKB-UniRule"/>
</dbReference>
<dbReference type="GO" id="GO:0043335">
    <property type="term" value="P:protein unfolding"/>
    <property type="evidence" value="ECO:0007669"/>
    <property type="project" value="UniProtKB-UniRule"/>
</dbReference>
<dbReference type="GO" id="GO:0051603">
    <property type="term" value="P:proteolysis involved in protein catabolic process"/>
    <property type="evidence" value="ECO:0007669"/>
    <property type="project" value="TreeGrafter"/>
</dbReference>
<dbReference type="CDD" id="cd19498">
    <property type="entry name" value="RecA-like_HslU"/>
    <property type="match status" value="1"/>
</dbReference>
<dbReference type="FunFam" id="1.10.8.10:FF:000028">
    <property type="entry name" value="ATP-dependent protease ATPase subunit HslU"/>
    <property type="match status" value="1"/>
</dbReference>
<dbReference type="FunFam" id="3.40.50.300:FF:000213">
    <property type="entry name" value="ATP-dependent protease ATPase subunit HslU"/>
    <property type="match status" value="1"/>
</dbReference>
<dbReference type="FunFam" id="3.40.50.300:FF:000220">
    <property type="entry name" value="ATP-dependent protease ATPase subunit HslU"/>
    <property type="match status" value="1"/>
</dbReference>
<dbReference type="Gene3D" id="1.10.8.60">
    <property type="match status" value="1"/>
</dbReference>
<dbReference type="Gene3D" id="1.10.8.10">
    <property type="entry name" value="DNA helicase RuvA subunit, C-terminal domain"/>
    <property type="match status" value="1"/>
</dbReference>
<dbReference type="Gene3D" id="3.40.50.300">
    <property type="entry name" value="P-loop containing nucleotide triphosphate hydrolases"/>
    <property type="match status" value="2"/>
</dbReference>
<dbReference type="HAMAP" id="MF_00249">
    <property type="entry name" value="HslU"/>
    <property type="match status" value="1"/>
</dbReference>
<dbReference type="InterPro" id="IPR003593">
    <property type="entry name" value="AAA+_ATPase"/>
</dbReference>
<dbReference type="InterPro" id="IPR050052">
    <property type="entry name" value="ATP-dep_Clp_protease_ClpX"/>
</dbReference>
<dbReference type="InterPro" id="IPR003959">
    <property type="entry name" value="ATPase_AAA_core"/>
</dbReference>
<dbReference type="InterPro" id="IPR019489">
    <property type="entry name" value="Clp_ATPase_C"/>
</dbReference>
<dbReference type="InterPro" id="IPR004491">
    <property type="entry name" value="HslU"/>
</dbReference>
<dbReference type="InterPro" id="IPR027417">
    <property type="entry name" value="P-loop_NTPase"/>
</dbReference>
<dbReference type="NCBIfam" id="TIGR00390">
    <property type="entry name" value="hslU"/>
    <property type="match status" value="1"/>
</dbReference>
<dbReference type="NCBIfam" id="NF003544">
    <property type="entry name" value="PRK05201.1"/>
    <property type="match status" value="1"/>
</dbReference>
<dbReference type="PANTHER" id="PTHR48102">
    <property type="entry name" value="ATP-DEPENDENT CLP PROTEASE ATP-BINDING SUBUNIT CLPX-LIKE, MITOCHONDRIAL-RELATED"/>
    <property type="match status" value="1"/>
</dbReference>
<dbReference type="PANTHER" id="PTHR48102:SF3">
    <property type="entry name" value="ATP-DEPENDENT PROTEASE ATPASE SUBUNIT HSLU"/>
    <property type="match status" value="1"/>
</dbReference>
<dbReference type="Pfam" id="PF00004">
    <property type="entry name" value="AAA"/>
    <property type="match status" value="1"/>
</dbReference>
<dbReference type="Pfam" id="PF07724">
    <property type="entry name" value="AAA_2"/>
    <property type="match status" value="1"/>
</dbReference>
<dbReference type="SMART" id="SM00382">
    <property type="entry name" value="AAA"/>
    <property type="match status" value="1"/>
</dbReference>
<dbReference type="SMART" id="SM01086">
    <property type="entry name" value="ClpB_D2-small"/>
    <property type="match status" value="1"/>
</dbReference>
<dbReference type="SUPFAM" id="SSF52540">
    <property type="entry name" value="P-loop containing nucleoside triphosphate hydrolases"/>
    <property type="match status" value="1"/>
</dbReference>
<feature type="chain" id="PRO_1000078450" description="ATP-dependent protease ATPase subunit HslU">
    <location>
        <begin position="1"/>
        <end position="447"/>
    </location>
</feature>
<feature type="binding site" evidence="1">
    <location>
        <position position="17"/>
    </location>
    <ligand>
        <name>ATP</name>
        <dbReference type="ChEBI" id="CHEBI:30616"/>
    </ligand>
</feature>
<feature type="binding site" evidence="1">
    <location>
        <begin position="59"/>
        <end position="64"/>
    </location>
    <ligand>
        <name>ATP</name>
        <dbReference type="ChEBI" id="CHEBI:30616"/>
    </ligand>
</feature>
<feature type="binding site" evidence="1">
    <location>
        <position position="256"/>
    </location>
    <ligand>
        <name>ATP</name>
        <dbReference type="ChEBI" id="CHEBI:30616"/>
    </ligand>
</feature>
<feature type="binding site" evidence="1">
    <location>
        <position position="321"/>
    </location>
    <ligand>
        <name>ATP</name>
        <dbReference type="ChEBI" id="CHEBI:30616"/>
    </ligand>
</feature>
<feature type="binding site" evidence="1">
    <location>
        <position position="393"/>
    </location>
    <ligand>
        <name>ATP</name>
        <dbReference type="ChEBI" id="CHEBI:30616"/>
    </ligand>
</feature>
<protein>
    <recommendedName>
        <fullName evidence="1">ATP-dependent protease ATPase subunit HslU</fullName>
    </recommendedName>
    <alternativeName>
        <fullName evidence="1">Unfoldase HslU</fullName>
    </alternativeName>
</protein>